<feature type="chain" id="PRO_0000253681" description="UDP-3-O-acyl-N-acetylglucosamine deacetylase">
    <location>
        <begin position="1"/>
        <end position="309"/>
    </location>
</feature>
<feature type="active site" description="Proton donor" evidence="1">
    <location>
        <position position="262"/>
    </location>
</feature>
<feature type="binding site" evidence="1">
    <location>
        <position position="78"/>
    </location>
    <ligand>
        <name>Zn(2+)</name>
        <dbReference type="ChEBI" id="CHEBI:29105"/>
    </ligand>
</feature>
<feature type="binding site" evidence="1">
    <location>
        <position position="235"/>
    </location>
    <ligand>
        <name>Zn(2+)</name>
        <dbReference type="ChEBI" id="CHEBI:29105"/>
    </ligand>
</feature>
<feature type="binding site" evidence="1">
    <location>
        <position position="239"/>
    </location>
    <ligand>
        <name>Zn(2+)</name>
        <dbReference type="ChEBI" id="CHEBI:29105"/>
    </ligand>
</feature>
<organism>
    <name type="scientific">Syntrophotalea carbinolica (strain DSM 2380 / NBRC 103641 / GraBd1)</name>
    <name type="common">Pelobacter carbinolicus</name>
    <dbReference type="NCBI Taxonomy" id="338963"/>
    <lineage>
        <taxon>Bacteria</taxon>
        <taxon>Pseudomonadati</taxon>
        <taxon>Thermodesulfobacteriota</taxon>
        <taxon>Desulfuromonadia</taxon>
        <taxon>Desulfuromonadales</taxon>
        <taxon>Syntrophotaleaceae</taxon>
        <taxon>Syntrophotalea</taxon>
    </lineage>
</organism>
<reference key="1">
    <citation type="submission" date="2005-10" db="EMBL/GenBank/DDBJ databases">
        <title>Complete sequence of Pelobacter carbinolicus DSM 2380.</title>
        <authorList>
            <person name="Copeland A."/>
            <person name="Lucas S."/>
            <person name="Lapidus A."/>
            <person name="Barry K."/>
            <person name="Detter J.C."/>
            <person name="Glavina T."/>
            <person name="Hammon N."/>
            <person name="Israni S."/>
            <person name="Pitluck S."/>
            <person name="Chertkov O."/>
            <person name="Schmutz J."/>
            <person name="Larimer F."/>
            <person name="Land M."/>
            <person name="Kyrpides N."/>
            <person name="Ivanova N."/>
            <person name="Richardson P."/>
        </authorList>
    </citation>
    <scope>NUCLEOTIDE SEQUENCE [LARGE SCALE GENOMIC DNA]</scope>
    <source>
        <strain>DSM 2380 / NBRC 103641 / GraBd1</strain>
    </source>
</reference>
<proteinExistence type="inferred from homology"/>
<comment type="function">
    <text evidence="1">Catalyzes the hydrolysis of UDP-3-O-myristoyl-N-acetylglucosamine to form UDP-3-O-myristoylglucosamine and acetate, the committed step in lipid A biosynthesis.</text>
</comment>
<comment type="catalytic activity">
    <reaction evidence="1">
        <text>a UDP-3-O-[(3R)-3-hydroxyacyl]-N-acetyl-alpha-D-glucosamine + H2O = a UDP-3-O-[(3R)-3-hydroxyacyl]-alpha-D-glucosamine + acetate</text>
        <dbReference type="Rhea" id="RHEA:67816"/>
        <dbReference type="ChEBI" id="CHEBI:15377"/>
        <dbReference type="ChEBI" id="CHEBI:30089"/>
        <dbReference type="ChEBI" id="CHEBI:137740"/>
        <dbReference type="ChEBI" id="CHEBI:173225"/>
        <dbReference type="EC" id="3.5.1.108"/>
    </reaction>
</comment>
<comment type="cofactor">
    <cofactor evidence="1">
        <name>Zn(2+)</name>
        <dbReference type="ChEBI" id="CHEBI:29105"/>
    </cofactor>
</comment>
<comment type="pathway">
    <text evidence="1">Glycolipid biosynthesis; lipid IV(A) biosynthesis; lipid IV(A) from (3R)-3-hydroxytetradecanoyl-[acyl-carrier-protein] and UDP-N-acetyl-alpha-D-glucosamine: step 2/6.</text>
</comment>
<comment type="similarity">
    <text evidence="1">Belongs to the LpxC family.</text>
</comment>
<sequence length="309" mass="33433">MIYQSTLNKPLTISGIGLHTGRQITMILRPAEPDNGIIFHCTDGERRVSIPAVSANVVDTRLATVIGKDGLSVSTIEHLMAALSACGIDNLHIDIDGPEVPVMDGSAAPFVALLQETGNRVQEKRRKYLAIRKPITLVDGEKRVSIIPSRFFRITFDIAFDHPCIGLQHRAIKVNTETFRKEIAPARTFGFLHEVEYLKANGLALGGSLDNAVVIGEEGVLNPDGVRFEDECVRHKILDAVGDFSLLGHRVLGHVKAYKAGHDINHQMVEKILANADCWQLVESGEAASHGSLSMTGCAAMAMAGVAEA</sequence>
<name>LPXC_SYNC1</name>
<accession>Q3A225</accession>
<evidence type="ECO:0000255" key="1">
    <source>
        <dbReference type="HAMAP-Rule" id="MF_00388"/>
    </source>
</evidence>
<gene>
    <name evidence="1" type="primary">lpxC</name>
    <name type="ordered locus">Pcar_2343</name>
</gene>
<keyword id="KW-0378">Hydrolase</keyword>
<keyword id="KW-0441">Lipid A biosynthesis</keyword>
<keyword id="KW-0444">Lipid biosynthesis</keyword>
<keyword id="KW-0443">Lipid metabolism</keyword>
<keyword id="KW-0479">Metal-binding</keyword>
<keyword id="KW-1185">Reference proteome</keyword>
<keyword id="KW-0862">Zinc</keyword>
<protein>
    <recommendedName>
        <fullName evidence="1">UDP-3-O-acyl-N-acetylglucosamine deacetylase</fullName>
        <shortName evidence="1">UDP-3-O-acyl-GlcNAc deacetylase</shortName>
        <ecNumber evidence="1">3.5.1.108</ecNumber>
    </recommendedName>
    <alternativeName>
        <fullName evidence="1">UDP-3-O-[R-3-hydroxymyristoyl]-N-acetylglucosamine deacetylase</fullName>
    </alternativeName>
</protein>
<dbReference type="EC" id="3.5.1.108" evidence="1"/>
<dbReference type="EMBL" id="CP000142">
    <property type="protein sequence ID" value="ABA89582.1"/>
    <property type="molecule type" value="Genomic_DNA"/>
</dbReference>
<dbReference type="RefSeq" id="WP_011342104.1">
    <property type="nucleotide sequence ID" value="NC_007498.2"/>
</dbReference>
<dbReference type="SMR" id="Q3A225"/>
<dbReference type="STRING" id="338963.Pcar_2343"/>
<dbReference type="KEGG" id="pca:Pcar_2343"/>
<dbReference type="eggNOG" id="COG0774">
    <property type="taxonomic scope" value="Bacteria"/>
</dbReference>
<dbReference type="HOGENOM" id="CLU_046528_1_0_7"/>
<dbReference type="OrthoDB" id="9802746at2"/>
<dbReference type="UniPathway" id="UPA00359">
    <property type="reaction ID" value="UER00478"/>
</dbReference>
<dbReference type="Proteomes" id="UP000002534">
    <property type="component" value="Chromosome"/>
</dbReference>
<dbReference type="GO" id="GO:0016020">
    <property type="term" value="C:membrane"/>
    <property type="evidence" value="ECO:0007669"/>
    <property type="project" value="GOC"/>
</dbReference>
<dbReference type="GO" id="GO:0046872">
    <property type="term" value="F:metal ion binding"/>
    <property type="evidence" value="ECO:0007669"/>
    <property type="project" value="UniProtKB-KW"/>
</dbReference>
<dbReference type="GO" id="GO:0103117">
    <property type="term" value="F:UDP-3-O-acyl-N-acetylglucosamine deacetylase activity"/>
    <property type="evidence" value="ECO:0007669"/>
    <property type="project" value="UniProtKB-UniRule"/>
</dbReference>
<dbReference type="GO" id="GO:0009245">
    <property type="term" value="P:lipid A biosynthetic process"/>
    <property type="evidence" value="ECO:0007669"/>
    <property type="project" value="UniProtKB-UniRule"/>
</dbReference>
<dbReference type="Gene3D" id="3.30.230.20">
    <property type="entry name" value="lpxc deacetylase, domain 1"/>
    <property type="match status" value="1"/>
</dbReference>
<dbReference type="Gene3D" id="3.30.1700.10">
    <property type="entry name" value="lpxc deacetylase, domain 2"/>
    <property type="match status" value="1"/>
</dbReference>
<dbReference type="HAMAP" id="MF_00388">
    <property type="entry name" value="LpxC"/>
    <property type="match status" value="1"/>
</dbReference>
<dbReference type="InterPro" id="IPR020568">
    <property type="entry name" value="Ribosomal_Su5_D2-typ_SF"/>
</dbReference>
<dbReference type="InterPro" id="IPR004463">
    <property type="entry name" value="UDP-acyl_GlcNac_deAcase"/>
</dbReference>
<dbReference type="InterPro" id="IPR011334">
    <property type="entry name" value="UDP-acyl_GlcNac_deAcase_C"/>
</dbReference>
<dbReference type="InterPro" id="IPR015870">
    <property type="entry name" value="UDP-acyl_N-AcGlcN_deAcase_N"/>
</dbReference>
<dbReference type="NCBIfam" id="TIGR00325">
    <property type="entry name" value="lpxC"/>
    <property type="match status" value="1"/>
</dbReference>
<dbReference type="PANTHER" id="PTHR33694">
    <property type="entry name" value="UDP-3-O-ACYL-N-ACETYLGLUCOSAMINE DEACETYLASE 1, MITOCHONDRIAL-RELATED"/>
    <property type="match status" value="1"/>
</dbReference>
<dbReference type="PANTHER" id="PTHR33694:SF1">
    <property type="entry name" value="UDP-3-O-ACYL-N-ACETYLGLUCOSAMINE DEACETYLASE 1, MITOCHONDRIAL-RELATED"/>
    <property type="match status" value="1"/>
</dbReference>
<dbReference type="Pfam" id="PF03331">
    <property type="entry name" value="LpxC"/>
    <property type="match status" value="1"/>
</dbReference>
<dbReference type="SUPFAM" id="SSF54211">
    <property type="entry name" value="Ribosomal protein S5 domain 2-like"/>
    <property type="match status" value="2"/>
</dbReference>